<reference key="1">
    <citation type="journal article" date="1999" name="Curr. Biol.">
        <title>Identification of a new member of the tumor necrosis factor family and its receptor, a human ortholog of mouse GITR.</title>
        <authorList>
            <person name="Gurney A.L."/>
            <person name="Marsters S.A."/>
            <person name="Huang R.M."/>
            <person name="Pitti R.M."/>
            <person name="Mark D.T."/>
            <person name="Baldwin D.T."/>
            <person name="Gray A.M."/>
            <person name="Dowd A.D."/>
            <person name="Brush A.D."/>
            <person name="Heldens A.D."/>
            <person name="Schow A.D."/>
            <person name="Goddard A.D."/>
            <person name="Wood W.I."/>
            <person name="Baker K.P."/>
            <person name="Godowski P.J."/>
            <person name="Ashkenazi A."/>
        </authorList>
    </citation>
    <scope>NUCLEOTIDE SEQUENCE [MRNA] (ISOFORM 1)</scope>
    <scope>INTERACTION WITH TRAF1; TRAF2 AND TRAF3</scope>
    <source>
        <tissue>Bone marrow</tissue>
    </source>
</reference>
<reference key="2">
    <citation type="journal article" date="1999" name="J. Biol. Chem.">
        <title>Identification of a novel activation-inducible protein of the tumor necrosis factor receptor superfamily and its ligand.</title>
        <authorList>
            <person name="Kwon B."/>
            <person name="Yu K.-Y."/>
            <person name="Ni J."/>
            <person name="Yu G.-L."/>
            <person name="Jang I.-K."/>
            <person name="Kim Y.-J."/>
            <person name="Xing L."/>
            <person name="Liu D."/>
            <person name="Wang S.-X."/>
            <person name="Kwon B.S."/>
        </authorList>
    </citation>
    <scope>NUCLEOTIDE SEQUENCE [MRNA] (ISOFORM 3)</scope>
    <source>
        <tissue>T-cell</tissue>
    </source>
</reference>
<reference key="3">
    <citation type="journal article" date="2000" name="Cell Death Differ.">
        <title>Identification of three novel mRNA splice variants of GITR.</title>
        <authorList>
            <person name="Nocentini G."/>
            <person name="Ronchetti S."/>
            <person name="Bartoli A."/>
            <person name="Spinicelli S."/>
            <person name="Delfino D."/>
            <person name="Brunetti L."/>
            <person name="Migliorati G."/>
            <person name="Riccardi C."/>
        </authorList>
    </citation>
    <scope>NUCLEOTIDE SEQUENCE [MRNA] (ISOFORM 2)</scope>
    <source>
        <tissue>Thymus</tissue>
    </source>
</reference>
<reference key="4">
    <citation type="journal article" date="2003" name="Genome Res.">
        <title>The secreted protein discovery initiative (SPDI), a large-scale effort to identify novel human secreted and transmembrane proteins: a bioinformatics assessment.</title>
        <authorList>
            <person name="Clark H.F."/>
            <person name="Gurney A.L."/>
            <person name="Abaya E."/>
            <person name="Baker K."/>
            <person name="Baldwin D.T."/>
            <person name="Brush J."/>
            <person name="Chen J."/>
            <person name="Chow B."/>
            <person name="Chui C."/>
            <person name="Crowley C."/>
            <person name="Currell B."/>
            <person name="Deuel B."/>
            <person name="Dowd P."/>
            <person name="Eaton D."/>
            <person name="Foster J.S."/>
            <person name="Grimaldi C."/>
            <person name="Gu Q."/>
            <person name="Hass P.E."/>
            <person name="Heldens S."/>
            <person name="Huang A."/>
            <person name="Kim H.S."/>
            <person name="Klimowski L."/>
            <person name="Jin Y."/>
            <person name="Johnson S."/>
            <person name="Lee J."/>
            <person name="Lewis L."/>
            <person name="Liao D."/>
            <person name="Mark M.R."/>
            <person name="Robbie E."/>
            <person name="Sanchez C."/>
            <person name="Schoenfeld J."/>
            <person name="Seshagiri S."/>
            <person name="Simmons L."/>
            <person name="Singh J."/>
            <person name="Smith V."/>
            <person name="Stinson J."/>
            <person name="Vagts A."/>
            <person name="Vandlen R.L."/>
            <person name="Watanabe C."/>
            <person name="Wieand D."/>
            <person name="Woods K."/>
            <person name="Xie M.-H."/>
            <person name="Yansura D.G."/>
            <person name="Yi S."/>
            <person name="Yu G."/>
            <person name="Yuan J."/>
            <person name="Zhang M."/>
            <person name="Zhang Z."/>
            <person name="Goddard A.D."/>
            <person name="Wood W.I."/>
            <person name="Godowski P.J."/>
            <person name="Gray A.M."/>
        </authorList>
    </citation>
    <scope>NUCLEOTIDE SEQUENCE [LARGE SCALE MRNA] (ISOFORM 1)</scope>
</reference>
<reference key="5">
    <citation type="submission" date="2004-10" db="EMBL/GenBank/DDBJ databases">
        <title>Cloning of human full-length CDSs in BD Creator(TM) system donor vector.</title>
        <authorList>
            <person name="Kalnine N."/>
            <person name="Chen X."/>
            <person name="Rolfs A."/>
            <person name="Halleck A."/>
            <person name="Hines L."/>
            <person name="Eisenstein S."/>
            <person name="Koundinya M."/>
            <person name="Raphael J."/>
            <person name="Moreira D."/>
            <person name="Kelley T."/>
            <person name="LaBaer J."/>
            <person name="Lin Y."/>
            <person name="Phelan M."/>
            <person name="Farmer A."/>
        </authorList>
    </citation>
    <scope>NUCLEOTIDE SEQUENCE [LARGE SCALE MRNA] (ISOFORM 1)</scope>
</reference>
<reference key="6">
    <citation type="journal article" date="2006" name="Nature">
        <title>The DNA sequence and biological annotation of human chromosome 1.</title>
        <authorList>
            <person name="Gregory S.G."/>
            <person name="Barlow K.F."/>
            <person name="McLay K.E."/>
            <person name="Kaul R."/>
            <person name="Swarbreck D."/>
            <person name="Dunham A."/>
            <person name="Scott C.E."/>
            <person name="Howe K.L."/>
            <person name="Woodfine K."/>
            <person name="Spencer C.C.A."/>
            <person name="Jones M.C."/>
            <person name="Gillson C."/>
            <person name="Searle S."/>
            <person name="Zhou Y."/>
            <person name="Kokocinski F."/>
            <person name="McDonald L."/>
            <person name="Evans R."/>
            <person name="Phillips K."/>
            <person name="Atkinson A."/>
            <person name="Cooper R."/>
            <person name="Jones C."/>
            <person name="Hall R.E."/>
            <person name="Andrews T.D."/>
            <person name="Lloyd C."/>
            <person name="Ainscough R."/>
            <person name="Almeida J.P."/>
            <person name="Ambrose K.D."/>
            <person name="Anderson F."/>
            <person name="Andrew R.W."/>
            <person name="Ashwell R.I.S."/>
            <person name="Aubin K."/>
            <person name="Babbage A.K."/>
            <person name="Bagguley C.L."/>
            <person name="Bailey J."/>
            <person name="Beasley H."/>
            <person name="Bethel G."/>
            <person name="Bird C.P."/>
            <person name="Bray-Allen S."/>
            <person name="Brown J.Y."/>
            <person name="Brown A.J."/>
            <person name="Buckley D."/>
            <person name="Burton J."/>
            <person name="Bye J."/>
            <person name="Carder C."/>
            <person name="Chapman J.C."/>
            <person name="Clark S.Y."/>
            <person name="Clarke G."/>
            <person name="Clee C."/>
            <person name="Cobley V."/>
            <person name="Collier R.E."/>
            <person name="Corby N."/>
            <person name="Coville G.J."/>
            <person name="Davies J."/>
            <person name="Deadman R."/>
            <person name="Dunn M."/>
            <person name="Earthrowl M."/>
            <person name="Ellington A.G."/>
            <person name="Errington H."/>
            <person name="Frankish A."/>
            <person name="Frankland J."/>
            <person name="French L."/>
            <person name="Garner P."/>
            <person name="Garnett J."/>
            <person name="Gay L."/>
            <person name="Ghori M.R.J."/>
            <person name="Gibson R."/>
            <person name="Gilby L.M."/>
            <person name="Gillett W."/>
            <person name="Glithero R.J."/>
            <person name="Grafham D.V."/>
            <person name="Griffiths C."/>
            <person name="Griffiths-Jones S."/>
            <person name="Grocock R."/>
            <person name="Hammond S."/>
            <person name="Harrison E.S.I."/>
            <person name="Hart E."/>
            <person name="Haugen E."/>
            <person name="Heath P.D."/>
            <person name="Holmes S."/>
            <person name="Holt K."/>
            <person name="Howden P.J."/>
            <person name="Hunt A.R."/>
            <person name="Hunt S.E."/>
            <person name="Hunter G."/>
            <person name="Isherwood J."/>
            <person name="James R."/>
            <person name="Johnson C."/>
            <person name="Johnson D."/>
            <person name="Joy A."/>
            <person name="Kay M."/>
            <person name="Kershaw J.K."/>
            <person name="Kibukawa M."/>
            <person name="Kimberley A.M."/>
            <person name="King A."/>
            <person name="Knights A.J."/>
            <person name="Lad H."/>
            <person name="Laird G."/>
            <person name="Lawlor S."/>
            <person name="Leongamornlert D.A."/>
            <person name="Lloyd D.M."/>
            <person name="Loveland J."/>
            <person name="Lovell J."/>
            <person name="Lush M.J."/>
            <person name="Lyne R."/>
            <person name="Martin S."/>
            <person name="Mashreghi-Mohammadi M."/>
            <person name="Matthews L."/>
            <person name="Matthews N.S.W."/>
            <person name="McLaren S."/>
            <person name="Milne S."/>
            <person name="Mistry S."/>
            <person name="Moore M.J.F."/>
            <person name="Nickerson T."/>
            <person name="O'Dell C.N."/>
            <person name="Oliver K."/>
            <person name="Palmeiri A."/>
            <person name="Palmer S.A."/>
            <person name="Parker A."/>
            <person name="Patel D."/>
            <person name="Pearce A.V."/>
            <person name="Peck A.I."/>
            <person name="Pelan S."/>
            <person name="Phelps K."/>
            <person name="Phillimore B.J."/>
            <person name="Plumb R."/>
            <person name="Rajan J."/>
            <person name="Raymond C."/>
            <person name="Rouse G."/>
            <person name="Saenphimmachak C."/>
            <person name="Sehra H.K."/>
            <person name="Sheridan E."/>
            <person name="Shownkeen R."/>
            <person name="Sims S."/>
            <person name="Skuce C.D."/>
            <person name="Smith M."/>
            <person name="Steward C."/>
            <person name="Subramanian S."/>
            <person name="Sycamore N."/>
            <person name="Tracey A."/>
            <person name="Tromans A."/>
            <person name="Van Helmond Z."/>
            <person name="Wall M."/>
            <person name="Wallis J.M."/>
            <person name="White S."/>
            <person name="Whitehead S.L."/>
            <person name="Wilkinson J.E."/>
            <person name="Willey D.L."/>
            <person name="Williams H."/>
            <person name="Wilming L."/>
            <person name="Wray P.W."/>
            <person name="Wu Z."/>
            <person name="Coulson A."/>
            <person name="Vaudin M."/>
            <person name="Sulston J.E."/>
            <person name="Durbin R.M."/>
            <person name="Hubbard T."/>
            <person name="Wooster R."/>
            <person name="Dunham I."/>
            <person name="Carter N.P."/>
            <person name="McVean G."/>
            <person name="Ross M.T."/>
            <person name="Harrow J."/>
            <person name="Olson M.V."/>
            <person name="Beck S."/>
            <person name="Rogers J."/>
            <person name="Bentley D.R."/>
        </authorList>
    </citation>
    <scope>NUCLEOTIDE SEQUENCE [LARGE SCALE GENOMIC DNA]</scope>
</reference>
<reference key="7">
    <citation type="submission" date="2005-07" db="EMBL/GenBank/DDBJ databases">
        <authorList>
            <person name="Mural R.J."/>
            <person name="Istrail S."/>
            <person name="Sutton G.G."/>
            <person name="Florea L."/>
            <person name="Halpern A.L."/>
            <person name="Mobarry C.M."/>
            <person name="Lippert R."/>
            <person name="Walenz B."/>
            <person name="Shatkay H."/>
            <person name="Dew I."/>
            <person name="Miller J.R."/>
            <person name="Flanigan M.J."/>
            <person name="Edwards N.J."/>
            <person name="Bolanos R."/>
            <person name="Fasulo D."/>
            <person name="Halldorsson B.V."/>
            <person name="Hannenhalli S."/>
            <person name="Turner R."/>
            <person name="Yooseph S."/>
            <person name="Lu F."/>
            <person name="Nusskern D.R."/>
            <person name="Shue B.C."/>
            <person name="Zheng X.H."/>
            <person name="Zhong F."/>
            <person name="Delcher A.L."/>
            <person name="Huson D.H."/>
            <person name="Kravitz S.A."/>
            <person name="Mouchard L."/>
            <person name="Reinert K."/>
            <person name="Remington K.A."/>
            <person name="Clark A.G."/>
            <person name="Waterman M.S."/>
            <person name="Eichler E.E."/>
            <person name="Adams M.D."/>
            <person name="Hunkapiller M.W."/>
            <person name="Myers E.W."/>
            <person name="Venter J.C."/>
        </authorList>
    </citation>
    <scope>NUCLEOTIDE SEQUENCE [LARGE SCALE GENOMIC DNA]</scope>
</reference>
<reference key="8">
    <citation type="journal article" date="2004" name="Genome Res.">
        <title>The status, quality, and expansion of the NIH full-length cDNA project: the Mammalian Gene Collection (MGC).</title>
        <authorList>
            <consortium name="The MGC Project Team"/>
        </authorList>
    </citation>
    <scope>NUCLEOTIDE SEQUENCE [LARGE SCALE MRNA] (ISOFORM 1)</scope>
</reference>
<reference key="9">
    <citation type="journal article" date="2004" name="Protein Sci.">
        <title>Signal peptide prediction based on analysis of experimentally verified cleavage sites.</title>
        <authorList>
            <person name="Zhang Z."/>
            <person name="Henzel W.J."/>
        </authorList>
    </citation>
    <scope>PROTEIN SEQUENCE OF 26-40</scope>
</reference>
<accession>Q9Y5U5</accession>
<accession>B1AME1</accession>
<accession>O95851</accession>
<accession>Q5U0I4</accession>
<accession>Q9NYJ9</accession>
<comment type="function">
    <text>Receptor for TNFSF18. Seems to be involved in interactions between activated T-lymphocytes and endothelial cells and in the regulation of T-cell receptor-mediated cell death. Mediated NF-kappa-B activation via the TRAF2/NIK pathway.</text>
</comment>
<comment type="subunit">
    <text>Binds to TRAF1, TRAF2, and TRAF3, but not TRAF5 and TRAF6. Binds through its C-terminus to SIVA1/SIVA.</text>
</comment>
<comment type="interaction">
    <interactant intactId="EBI-3962532">
        <id>Q9Y5U5</id>
    </interactant>
    <interactant intactId="EBI-15672281">
        <id>Q9UNG2</id>
        <label>TNFSF18</label>
    </interactant>
    <organismsDiffer>false</organismsDiffer>
    <experiments>2</experiments>
</comment>
<comment type="interaction">
    <interactant intactId="EBI-12197205">
        <id>Q9Y5U5-2</id>
    </interactant>
    <interactant intactId="EBI-947187">
        <id>Q9UHD9</id>
        <label>UBQLN2</label>
    </interactant>
    <organismsDiffer>false</organismsDiffer>
    <experiments>3</experiments>
</comment>
<comment type="subcellular location">
    <molecule>Isoform 1</molecule>
    <subcellularLocation>
        <location>Cell membrane</location>
        <topology>Single-pass type I membrane protein</topology>
    </subcellularLocation>
</comment>
<comment type="subcellular location">
    <molecule>Isoform 2</molecule>
    <subcellularLocation>
        <location>Secreted</location>
    </subcellularLocation>
</comment>
<comment type="alternative products">
    <event type="alternative splicing"/>
    <isoform>
        <id>Q9Y5U5-1</id>
        <name>1</name>
        <sequence type="displayed"/>
    </isoform>
    <isoform>
        <id>Q9Y5U5-2</id>
        <name>2</name>
        <name>GITR-D</name>
        <sequence type="described" ref="VSP_006508"/>
    </isoform>
    <isoform>
        <id>Q9Y5U5-3</id>
        <name>3</name>
        <sequence type="described" ref="VSP_041021"/>
    </isoform>
</comment>
<comment type="tissue specificity">
    <text>Expressed in lymph node, peripheral blood leukocytes and weakly in spleen.</text>
</comment>
<comment type="induction">
    <text>Up-regulated in peripherical mononuclear cells after antigen stimulation/lymphocyte activation.</text>
</comment>
<sequence>MAQHGAMGAFRALCGLALLCALSLGQRPTGGPGCGPGRLLLGTGTDARCCRVHTTRCCRDYPGEECCSEWDCMCVQPEFHCGDPCCTTCRHHPCPPGQGVQSQGKFSFGFQCIDCASGTFSGGHEGHCKPWTDCTQFGFLTVFPGNKTHNAVCVPGSPPAEPLGWLTVVLLAVAACVLLLTSAQLGLHIWQLRSQCMWPRETQLLLEVPPSTEDARSCQFPEEERGERSAEEKGRLGDLWV</sequence>
<name>TNR18_HUMAN</name>
<protein>
    <recommendedName>
        <fullName>Tumor necrosis factor receptor superfamily member 18</fullName>
    </recommendedName>
    <alternativeName>
        <fullName>Activation-inducible TNFR family receptor</fullName>
    </alternativeName>
    <alternativeName>
        <fullName>Glucocorticoid-induced TNFR-related protein</fullName>
    </alternativeName>
    <cdAntigenName>CD357</cdAntigenName>
</protein>
<gene>
    <name type="primary">TNFRSF18</name>
    <name type="synonym">AITR</name>
    <name type="synonym">GITR</name>
    <name type="ORF">UNQ319/PRO364</name>
</gene>
<dbReference type="EMBL" id="AF125304">
    <property type="protein sequence ID" value="AAD22635.1"/>
    <property type="molecule type" value="mRNA"/>
</dbReference>
<dbReference type="EMBL" id="AF117297">
    <property type="protein sequence ID" value="AAD19694.1"/>
    <property type="molecule type" value="mRNA"/>
</dbReference>
<dbReference type="EMBL" id="AF241229">
    <property type="protein sequence ID" value="AAF63506.1"/>
    <property type="molecule type" value="mRNA"/>
</dbReference>
<dbReference type="EMBL" id="AY358877">
    <property type="protein sequence ID" value="AAQ89236.1"/>
    <property type="molecule type" value="mRNA"/>
</dbReference>
<dbReference type="EMBL" id="BT019531">
    <property type="protein sequence ID" value="AAV38338.1"/>
    <property type="molecule type" value="mRNA"/>
</dbReference>
<dbReference type="EMBL" id="BT019532">
    <property type="protein sequence ID" value="AAV38339.1"/>
    <property type="molecule type" value="mRNA"/>
</dbReference>
<dbReference type="EMBL" id="AL162741">
    <property type="status" value="NOT_ANNOTATED_CDS"/>
    <property type="molecule type" value="Genomic_DNA"/>
</dbReference>
<dbReference type="EMBL" id="CH471183">
    <property type="protein sequence ID" value="EAW56282.1"/>
    <property type="molecule type" value="Genomic_DNA"/>
</dbReference>
<dbReference type="EMBL" id="CH471183">
    <property type="protein sequence ID" value="EAW56283.1"/>
    <property type="molecule type" value="Genomic_DNA"/>
</dbReference>
<dbReference type="EMBL" id="BC152381">
    <property type="protein sequence ID" value="AAI52382.1"/>
    <property type="molecule type" value="mRNA"/>
</dbReference>
<dbReference type="CCDS" id="CCDS10.1">
    <molecule id="Q9Y5U5-1"/>
</dbReference>
<dbReference type="CCDS" id="CCDS30552.1">
    <molecule id="Q9Y5U5-3"/>
</dbReference>
<dbReference type="CCDS" id="CCDS9.1">
    <molecule id="Q9Y5U5-2"/>
</dbReference>
<dbReference type="RefSeq" id="NP_004186.1">
    <molecule id="Q9Y5U5-1"/>
    <property type="nucleotide sequence ID" value="NM_004195.3"/>
</dbReference>
<dbReference type="RefSeq" id="NP_683699.1">
    <molecule id="Q9Y5U5-2"/>
    <property type="nucleotide sequence ID" value="NM_148901.2"/>
</dbReference>
<dbReference type="RefSeq" id="NP_683700.1">
    <molecule id="Q9Y5U5-3"/>
    <property type="nucleotide sequence ID" value="NM_148902.2"/>
</dbReference>
<dbReference type="PDB" id="7KHD">
    <property type="method" value="X-ray"/>
    <property type="resolution" value="2.96 A"/>
    <property type="chains" value="C/D=26-162"/>
</dbReference>
<dbReference type="PDB" id="7LAW">
    <property type="method" value="X-ray"/>
    <property type="resolution" value="2.75 A"/>
    <property type="chains" value="R/S=26-161"/>
</dbReference>
<dbReference type="PDBsum" id="7KHD"/>
<dbReference type="PDBsum" id="7LAW"/>
<dbReference type="SMR" id="Q9Y5U5"/>
<dbReference type="BioGRID" id="114312">
    <property type="interactions" value="14"/>
</dbReference>
<dbReference type="DIP" id="DIP-29883N"/>
<dbReference type="FunCoup" id="Q9Y5U5">
    <property type="interactions" value="703"/>
</dbReference>
<dbReference type="IntAct" id="Q9Y5U5">
    <property type="interactions" value="6"/>
</dbReference>
<dbReference type="STRING" id="9606.ENSP00000328207"/>
<dbReference type="ChEMBL" id="CHEMBL3712995"/>
<dbReference type="GlyCosmos" id="Q9Y5U5">
    <property type="glycosylation" value="1 site, No reported glycans"/>
</dbReference>
<dbReference type="GlyGen" id="Q9Y5U5">
    <property type="glycosylation" value="1 site"/>
</dbReference>
<dbReference type="iPTMnet" id="Q9Y5U5"/>
<dbReference type="PhosphoSitePlus" id="Q9Y5U5"/>
<dbReference type="SwissPalm" id="Q9Y5U5"/>
<dbReference type="BioMuta" id="TNFRSF18"/>
<dbReference type="DMDM" id="13878830"/>
<dbReference type="jPOST" id="Q9Y5U5"/>
<dbReference type="MassIVE" id="Q9Y5U5"/>
<dbReference type="PaxDb" id="9606-ENSP00000328207"/>
<dbReference type="PeptideAtlas" id="Q9Y5U5"/>
<dbReference type="ProteomicsDB" id="86508">
    <molecule id="Q9Y5U5-1"/>
</dbReference>
<dbReference type="ProteomicsDB" id="86509">
    <molecule id="Q9Y5U5-2"/>
</dbReference>
<dbReference type="ProteomicsDB" id="86510">
    <molecule id="Q9Y5U5-3"/>
</dbReference>
<dbReference type="TopDownProteomics" id="Q9Y5U5-2">
    <molecule id="Q9Y5U5-2"/>
</dbReference>
<dbReference type="ABCD" id="Q9Y5U5">
    <property type="antibodies" value="41 sequenced antibodies"/>
</dbReference>
<dbReference type="Antibodypedia" id="2154">
    <property type="antibodies" value="1219 antibodies from 43 providers"/>
</dbReference>
<dbReference type="DNASU" id="8784"/>
<dbReference type="Ensembl" id="ENST00000328596.10">
    <molecule id="Q9Y5U5-2"/>
    <property type="protein sequence ID" value="ENSP00000328207.6"/>
    <property type="gene ID" value="ENSG00000186891.14"/>
</dbReference>
<dbReference type="Ensembl" id="ENST00000379265.5">
    <molecule id="Q9Y5U5-3"/>
    <property type="protein sequence ID" value="ENSP00000368567.5"/>
    <property type="gene ID" value="ENSG00000186891.14"/>
</dbReference>
<dbReference type="Ensembl" id="ENST00000379268.7">
    <molecule id="Q9Y5U5-1"/>
    <property type="protein sequence ID" value="ENSP00000368570.2"/>
    <property type="gene ID" value="ENSG00000186891.14"/>
</dbReference>
<dbReference type="GeneID" id="8784"/>
<dbReference type="KEGG" id="hsa:8784"/>
<dbReference type="MANE-Select" id="ENST00000379268.7">
    <property type="protein sequence ID" value="ENSP00000368570.2"/>
    <property type="RefSeq nucleotide sequence ID" value="NM_004195.3"/>
    <property type="RefSeq protein sequence ID" value="NP_004186.1"/>
</dbReference>
<dbReference type="UCSC" id="uc001adb.4">
    <molecule id="Q9Y5U5-1"/>
    <property type="organism name" value="human"/>
</dbReference>
<dbReference type="AGR" id="HGNC:11914"/>
<dbReference type="CTD" id="8784"/>
<dbReference type="DisGeNET" id="8784"/>
<dbReference type="GeneCards" id="TNFRSF18"/>
<dbReference type="HGNC" id="HGNC:11914">
    <property type="gene designation" value="TNFRSF18"/>
</dbReference>
<dbReference type="HPA" id="ENSG00000186891">
    <property type="expression patterns" value="Tissue enhanced (skin)"/>
</dbReference>
<dbReference type="MIM" id="603905">
    <property type="type" value="gene"/>
</dbReference>
<dbReference type="neXtProt" id="NX_Q9Y5U5"/>
<dbReference type="OpenTargets" id="ENSG00000186891"/>
<dbReference type="PharmGKB" id="PA36607"/>
<dbReference type="VEuPathDB" id="HostDB:ENSG00000186891"/>
<dbReference type="eggNOG" id="ENOG502SAN0">
    <property type="taxonomic scope" value="Eukaryota"/>
</dbReference>
<dbReference type="GeneTree" id="ENSGT00730000111424"/>
<dbReference type="HOGENOM" id="CLU_1017554_0_0_1"/>
<dbReference type="InParanoid" id="Q9Y5U5"/>
<dbReference type="OMA" id="DTCSCQF"/>
<dbReference type="OrthoDB" id="9374769at2759"/>
<dbReference type="PAN-GO" id="Q9Y5U5">
    <property type="GO annotations" value="2 GO annotations based on evolutionary models"/>
</dbReference>
<dbReference type="PhylomeDB" id="Q9Y5U5"/>
<dbReference type="TreeFam" id="TF336151"/>
<dbReference type="PathwayCommons" id="Q9Y5U5"/>
<dbReference type="Reactome" id="R-HSA-5669034">
    <property type="pathway name" value="TNFs bind their physiological receptors"/>
</dbReference>
<dbReference type="Reactome" id="R-HSA-8877330">
    <property type="pathway name" value="RUNX1 and FOXP3 control the development of regulatory T lymphocytes (Tregs)"/>
</dbReference>
<dbReference type="SignaLink" id="Q9Y5U5"/>
<dbReference type="BioGRID-ORCS" id="8784">
    <property type="hits" value="13 hits in 1146 CRISPR screens"/>
</dbReference>
<dbReference type="GeneWiki" id="TNFRSF18"/>
<dbReference type="GenomeRNAi" id="8784"/>
<dbReference type="Pharos" id="Q9Y5U5">
    <property type="development level" value="Tbio"/>
</dbReference>
<dbReference type="PRO" id="PR:Q9Y5U5"/>
<dbReference type="Proteomes" id="UP000005640">
    <property type="component" value="Chromosome 1"/>
</dbReference>
<dbReference type="RNAct" id="Q9Y5U5">
    <property type="molecule type" value="protein"/>
</dbReference>
<dbReference type="Bgee" id="ENSG00000186891">
    <property type="expression patterns" value="Expressed in skin of abdomen and 117 other cell types or tissues"/>
</dbReference>
<dbReference type="ExpressionAtlas" id="Q9Y5U5">
    <property type="expression patterns" value="baseline and differential"/>
</dbReference>
<dbReference type="GO" id="GO:0009897">
    <property type="term" value="C:external side of plasma membrane"/>
    <property type="evidence" value="ECO:0000318"/>
    <property type="project" value="GO_Central"/>
</dbReference>
<dbReference type="GO" id="GO:0005576">
    <property type="term" value="C:extracellular region"/>
    <property type="evidence" value="ECO:0007669"/>
    <property type="project" value="UniProtKB-SubCell"/>
</dbReference>
<dbReference type="GO" id="GO:0005886">
    <property type="term" value="C:plasma membrane"/>
    <property type="evidence" value="ECO:0000304"/>
    <property type="project" value="Reactome"/>
</dbReference>
<dbReference type="GO" id="GO:0005031">
    <property type="term" value="F:tumor necrosis factor receptor activity"/>
    <property type="evidence" value="ECO:0000304"/>
    <property type="project" value="ProtInc"/>
</dbReference>
<dbReference type="GO" id="GO:0006915">
    <property type="term" value="P:apoptotic process"/>
    <property type="evidence" value="ECO:0007669"/>
    <property type="project" value="UniProtKB-KW"/>
</dbReference>
<dbReference type="GO" id="GO:0043066">
    <property type="term" value="P:negative regulation of apoptotic process"/>
    <property type="evidence" value="ECO:0000304"/>
    <property type="project" value="ProtInc"/>
</dbReference>
<dbReference type="GO" id="GO:0045785">
    <property type="term" value="P:positive regulation of cell adhesion"/>
    <property type="evidence" value="ECO:0000315"/>
    <property type="project" value="UniProtKB"/>
</dbReference>
<dbReference type="GO" id="GO:0002687">
    <property type="term" value="P:positive regulation of leukocyte migration"/>
    <property type="evidence" value="ECO:0000315"/>
    <property type="project" value="UniProtKB"/>
</dbReference>
<dbReference type="GO" id="GO:0042531">
    <property type="term" value="P:positive regulation of tyrosine phosphorylation of STAT protein"/>
    <property type="evidence" value="ECO:0000315"/>
    <property type="project" value="UniProtKB"/>
</dbReference>
<dbReference type="GO" id="GO:0007165">
    <property type="term" value="P:signal transduction"/>
    <property type="evidence" value="ECO:0000304"/>
    <property type="project" value="ProtInc"/>
</dbReference>
<dbReference type="CDD" id="cd13417">
    <property type="entry name" value="TNFRSF18"/>
    <property type="match status" value="1"/>
</dbReference>
<dbReference type="Gene3D" id="2.10.50.10">
    <property type="entry name" value="Tumor Necrosis Factor Receptor, subunit A, domain 2"/>
    <property type="match status" value="1"/>
</dbReference>
<dbReference type="InterPro" id="IPR001368">
    <property type="entry name" value="TNFR/NGFR_Cys_rich_reg"/>
</dbReference>
<dbReference type="InterPro" id="IPR022318">
    <property type="entry name" value="TNFR_18"/>
</dbReference>
<dbReference type="InterPro" id="IPR053107">
    <property type="entry name" value="TNFRSF18"/>
</dbReference>
<dbReference type="InterPro" id="IPR034018">
    <property type="entry name" value="TNFRSF18_N"/>
</dbReference>
<dbReference type="PANTHER" id="PTHR47388">
    <property type="entry name" value="TUMOR NECROSIS FACTOR RECEPTOR SUPERFAMILY MEMBER 18"/>
    <property type="match status" value="1"/>
</dbReference>
<dbReference type="PANTHER" id="PTHR47388:SF1">
    <property type="entry name" value="TUMOR NECROSIS FACTOR RECEPTOR SUPERFAMILY MEMBER 18"/>
    <property type="match status" value="1"/>
</dbReference>
<dbReference type="PRINTS" id="PR01968">
    <property type="entry name" value="TNFACTORR18"/>
</dbReference>
<dbReference type="SMART" id="SM00208">
    <property type="entry name" value="TNFR"/>
    <property type="match status" value="1"/>
</dbReference>
<proteinExistence type="evidence at protein level"/>
<evidence type="ECO:0000250" key="1"/>
<evidence type="ECO:0000255" key="2"/>
<evidence type="ECO:0000256" key="3">
    <source>
        <dbReference type="SAM" id="MobiDB-lite"/>
    </source>
</evidence>
<evidence type="ECO:0000269" key="4">
    <source>
    </source>
</evidence>
<evidence type="ECO:0000303" key="5">
    <source>
    </source>
</evidence>
<evidence type="ECO:0000303" key="6">
    <source>
    </source>
</evidence>
<evidence type="ECO:0007829" key="7">
    <source>
        <dbReference type="PDB" id="7KHD"/>
    </source>
</evidence>
<evidence type="ECO:0007829" key="8">
    <source>
        <dbReference type="PDB" id="7LAW"/>
    </source>
</evidence>
<feature type="signal peptide" evidence="4">
    <location>
        <begin position="1"/>
        <end position="25"/>
    </location>
</feature>
<feature type="chain" id="PRO_0000034595" description="Tumor necrosis factor receptor superfamily member 18">
    <location>
        <begin position="26"/>
        <end position="241"/>
    </location>
</feature>
<feature type="topological domain" description="Extracellular" evidence="2">
    <location>
        <begin position="26"/>
        <end position="162"/>
    </location>
</feature>
<feature type="transmembrane region" description="Helical" evidence="2">
    <location>
        <begin position="163"/>
        <end position="183"/>
    </location>
</feature>
<feature type="topological domain" description="Cytoplasmic" evidence="2">
    <location>
        <begin position="184"/>
        <end position="241"/>
    </location>
</feature>
<feature type="repeat" description="TNFR-Cys 1">
    <location>
        <begin position="34"/>
        <end position="72"/>
    </location>
</feature>
<feature type="repeat" description="TNFR-Cys 2">
    <location>
        <begin position="74"/>
        <end position="112"/>
    </location>
</feature>
<feature type="repeat" description="TNFR-Cys 3">
    <location>
        <begin position="115"/>
        <end position="153"/>
    </location>
</feature>
<feature type="region of interest" description="Disordered" evidence="3">
    <location>
        <begin position="214"/>
        <end position="241"/>
    </location>
</feature>
<feature type="compositionally biased region" description="Basic and acidic residues" evidence="3">
    <location>
        <begin position="222"/>
        <end position="241"/>
    </location>
</feature>
<feature type="glycosylation site" description="N-linked (GlcNAc...) asparagine" evidence="2">
    <location>
        <position position="146"/>
    </location>
</feature>
<feature type="disulfide bond" evidence="1">
    <location>
        <begin position="34"/>
        <end position="49"/>
    </location>
</feature>
<feature type="disulfide bond" evidence="1">
    <location>
        <begin position="74"/>
        <end position="86"/>
    </location>
</feature>
<feature type="disulfide bond" evidence="1">
    <location>
        <begin position="81"/>
        <end position="94"/>
    </location>
</feature>
<feature type="disulfide bond" evidence="1">
    <location>
        <begin position="115"/>
        <end position="134"/>
    </location>
</feature>
<feature type="disulfide bond" evidence="1">
    <location>
        <begin position="128"/>
        <end position="153"/>
    </location>
</feature>
<feature type="splice variant" id="VSP_006508" description="In isoform 2." evidence="6">
    <original>TQFGFLTVFPGNKTHNAVCVPGSPPAEPLGWLTVVLLAVAACVLLLTSAQLGLHIWQLRSQCMWPRETQLLLEVPPSTEDARSCQFPEEERGERSAEEKGRLGDLWV</original>
    <variation>CWRCRRRPKTPEAASSPRKSGASDRQRRRGGWETCGCEPGRPPGPPTAASPSPGAPQAAGALRSALGRALLPWQQKWVQEGGSDQRPGPCSSAAAAGPCRRERETQSWPPSSLAGPDGVGS</variation>
    <location>
        <begin position="135"/>
        <end position="241"/>
    </location>
</feature>
<feature type="splice variant" id="VSP_041021" description="In isoform 3." evidence="5">
    <original>SQCMWPRE</original>
    <variation>K</variation>
    <location>
        <begin position="194"/>
        <end position="201"/>
    </location>
</feature>
<feature type="sequence variant" id="VAR_052354" description="In dbSNP:rs11466676.">
    <original>T</original>
    <variation>R</variation>
    <location>
        <position position="43"/>
    </location>
</feature>
<feature type="sequence variant" id="VAR_052355" description="In dbSNP:rs11466687.">
    <original>E</original>
    <variation>K</variation>
    <location>
        <position position="64"/>
    </location>
</feature>
<feature type="sequence variant" id="VAR_052356" description="In dbSNP:rs11466688.">
    <original>D</original>
    <variation>N</variation>
    <location>
        <position position="83"/>
    </location>
</feature>
<feature type="sequence variant" id="VAR_052357" description="In dbSNP:rs11466693.">
    <original>V</original>
    <variation>M</variation>
    <location>
        <position position="173"/>
    </location>
</feature>
<feature type="strand" evidence="7">
    <location>
        <begin position="40"/>
        <end position="42"/>
    </location>
</feature>
<feature type="helix" evidence="7">
    <location>
        <begin position="44"/>
        <end position="46"/>
    </location>
</feature>
<feature type="strand" evidence="8">
    <location>
        <begin position="65"/>
        <end position="67"/>
    </location>
</feature>
<feature type="strand" evidence="8">
    <location>
        <begin position="69"/>
        <end position="73"/>
    </location>
</feature>
<feature type="strand" evidence="8">
    <location>
        <begin position="79"/>
        <end position="83"/>
    </location>
</feature>
<feature type="strand" evidence="8">
    <location>
        <begin position="88"/>
        <end position="91"/>
    </location>
</feature>
<feature type="strand" evidence="8">
    <location>
        <begin position="98"/>
        <end position="107"/>
    </location>
</feature>
<feature type="strand" evidence="8">
    <location>
        <begin position="109"/>
        <end position="114"/>
    </location>
</feature>
<feature type="strand" evidence="8">
    <location>
        <begin position="123"/>
        <end position="125"/>
    </location>
</feature>
<feature type="helix" evidence="8">
    <location>
        <begin position="134"/>
        <end position="136"/>
    </location>
</feature>
<feature type="strand" evidence="8">
    <location>
        <begin position="139"/>
        <end position="143"/>
    </location>
</feature>
<feature type="strand" evidence="8">
    <location>
        <begin position="147"/>
        <end position="149"/>
    </location>
</feature>
<feature type="strand" evidence="8">
    <location>
        <begin position="152"/>
        <end position="155"/>
    </location>
</feature>
<keyword id="KW-0002">3D-structure</keyword>
<keyword id="KW-0025">Alternative splicing</keyword>
<keyword id="KW-0053">Apoptosis</keyword>
<keyword id="KW-1003">Cell membrane</keyword>
<keyword id="KW-0903">Direct protein sequencing</keyword>
<keyword id="KW-1015">Disulfide bond</keyword>
<keyword id="KW-0325">Glycoprotein</keyword>
<keyword id="KW-0472">Membrane</keyword>
<keyword id="KW-1267">Proteomics identification</keyword>
<keyword id="KW-0675">Receptor</keyword>
<keyword id="KW-1185">Reference proteome</keyword>
<keyword id="KW-0677">Repeat</keyword>
<keyword id="KW-0964">Secreted</keyword>
<keyword id="KW-0732">Signal</keyword>
<keyword id="KW-0812">Transmembrane</keyword>
<keyword id="KW-1133">Transmembrane helix</keyword>
<organism>
    <name type="scientific">Homo sapiens</name>
    <name type="common">Human</name>
    <dbReference type="NCBI Taxonomy" id="9606"/>
    <lineage>
        <taxon>Eukaryota</taxon>
        <taxon>Metazoa</taxon>
        <taxon>Chordata</taxon>
        <taxon>Craniata</taxon>
        <taxon>Vertebrata</taxon>
        <taxon>Euteleostomi</taxon>
        <taxon>Mammalia</taxon>
        <taxon>Eutheria</taxon>
        <taxon>Euarchontoglires</taxon>
        <taxon>Primates</taxon>
        <taxon>Haplorrhini</taxon>
        <taxon>Catarrhini</taxon>
        <taxon>Hominidae</taxon>
        <taxon>Homo</taxon>
    </lineage>
</organism>